<reference key="1">
    <citation type="submission" date="1999-01" db="EMBL/GenBank/DDBJ databases">
        <title>Contribution of cytochrome b and 12S rRNA mitochondrial genes to the systematic position of Graphiurus (Rodentia, Gliridae).</title>
        <authorList>
            <person name="Bentz S."/>
            <person name="Montgelard C."/>
        </authorList>
    </citation>
    <scope>NUCLEOTIDE SEQUENCE [GENOMIC DNA]</scope>
    <source>
        <strain>Isolate E-4866</strain>
    </source>
</reference>
<accession>Q9ZZT7</accession>
<name>CYB_ELIQU</name>
<proteinExistence type="inferred from homology"/>
<organism>
    <name type="scientific">Eliomys quercinus</name>
    <name type="common">Garden dormouse</name>
    <dbReference type="NCBI Taxonomy" id="53277"/>
    <lineage>
        <taxon>Eukaryota</taxon>
        <taxon>Metazoa</taxon>
        <taxon>Chordata</taxon>
        <taxon>Craniata</taxon>
        <taxon>Vertebrata</taxon>
        <taxon>Euteleostomi</taxon>
        <taxon>Mammalia</taxon>
        <taxon>Eutheria</taxon>
        <taxon>Euarchontoglires</taxon>
        <taxon>Glires</taxon>
        <taxon>Rodentia</taxon>
        <taxon>Sciuromorpha</taxon>
        <taxon>Gliridae</taxon>
        <taxon>Leithiinae</taxon>
        <taxon>Eliomys</taxon>
    </lineage>
</organism>
<evidence type="ECO:0000250" key="1"/>
<evidence type="ECO:0000250" key="2">
    <source>
        <dbReference type="UniProtKB" id="P00157"/>
    </source>
</evidence>
<evidence type="ECO:0000255" key="3">
    <source>
        <dbReference type="PROSITE-ProRule" id="PRU00967"/>
    </source>
</evidence>
<evidence type="ECO:0000255" key="4">
    <source>
        <dbReference type="PROSITE-ProRule" id="PRU00968"/>
    </source>
</evidence>
<protein>
    <recommendedName>
        <fullName>Cytochrome b</fullName>
    </recommendedName>
    <alternativeName>
        <fullName>Complex III subunit 3</fullName>
    </alternativeName>
    <alternativeName>
        <fullName>Complex III subunit III</fullName>
    </alternativeName>
    <alternativeName>
        <fullName>Cytochrome b-c1 complex subunit 3</fullName>
    </alternativeName>
    <alternativeName>
        <fullName>Ubiquinol-cytochrome-c reductase complex cytochrome b subunit</fullName>
    </alternativeName>
</protein>
<comment type="function">
    <text evidence="2">Component of the ubiquinol-cytochrome c reductase complex (complex III or cytochrome b-c1 complex) that is part of the mitochondrial respiratory chain. The b-c1 complex mediates electron transfer from ubiquinol to cytochrome c. Contributes to the generation of a proton gradient across the mitochondrial membrane that is then used for ATP synthesis.</text>
</comment>
<comment type="cofactor">
    <cofactor evidence="2">
        <name>heme b</name>
        <dbReference type="ChEBI" id="CHEBI:60344"/>
    </cofactor>
    <text evidence="2">Binds 2 heme b groups non-covalently.</text>
</comment>
<comment type="subunit">
    <text evidence="2">The cytochrome bc1 complex contains 11 subunits: 3 respiratory subunits (MT-CYB, CYC1 and UQCRFS1), 2 core proteins (UQCRC1 and UQCRC2) and 6 low-molecular weight proteins (UQCRH/QCR6, UQCRB/QCR7, UQCRQ/QCR8, UQCR10/QCR9, UQCR11/QCR10 and a cleavage product of UQCRFS1). This cytochrome bc1 complex then forms a dimer.</text>
</comment>
<comment type="subcellular location">
    <subcellularLocation>
        <location evidence="2">Mitochondrion inner membrane</location>
        <topology evidence="2">Multi-pass membrane protein</topology>
    </subcellularLocation>
</comment>
<comment type="miscellaneous">
    <text evidence="1">Heme 1 (or BL or b562) is low-potential and absorbs at about 562 nm, and heme 2 (or BH or b566) is high-potential and absorbs at about 566 nm.</text>
</comment>
<comment type="similarity">
    <text evidence="3 4">Belongs to the cytochrome b family.</text>
</comment>
<comment type="caution">
    <text evidence="2">The full-length protein contains only eight transmembrane helices, not nine as predicted by bioinformatics tools.</text>
</comment>
<feature type="chain" id="PRO_0000060916" description="Cytochrome b">
    <location>
        <begin position="1"/>
        <end position="379"/>
    </location>
</feature>
<feature type="transmembrane region" description="Helical" evidence="2">
    <location>
        <begin position="33"/>
        <end position="53"/>
    </location>
</feature>
<feature type="transmembrane region" description="Helical" evidence="2">
    <location>
        <begin position="77"/>
        <end position="98"/>
    </location>
</feature>
<feature type="transmembrane region" description="Helical" evidence="2">
    <location>
        <begin position="113"/>
        <end position="133"/>
    </location>
</feature>
<feature type="transmembrane region" description="Helical" evidence="2">
    <location>
        <begin position="178"/>
        <end position="198"/>
    </location>
</feature>
<feature type="transmembrane region" description="Helical" evidence="2">
    <location>
        <begin position="226"/>
        <end position="246"/>
    </location>
</feature>
<feature type="transmembrane region" description="Helical" evidence="2">
    <location>
        <begin position="288"/>
        <end position="308"/>
    </location>
</feature>
<feature type="transmembrane region" description="Helical" evidence="2">
    <location>
        <begin position="320"/>
        <end position="340"/>
    </location>
</feature>
<feature type="transmembrane region" description="Helical" evidence="2">
    <location>
        <begin position="347"/>
        <end position="367"/>
    </location>
</feature>
<feature type="binding site" description="axial binding residue" evidence="2">
    <location>
        <position position="83"/>
    </location>
    <ligand>
        <name>heme b</name>
        <dbReference type="ChEBI" id="CHEBI:60344"/>
        <label>b562</label>
    </ligand>
    <ligandPart>
        <name>Fe</name>
        <dbReference type="ChEBI" id="CHEBI:18248"/>
    </ligandPart>
</feature>
<feature type="binding site" description="axial binding residue" evidence="2">
    <location>
        <position position="97"/>
    </location>
    <ligand>
        <name>heme b</name>
        <dbReference type="ChEBI" id="CHEBI:60344"/>
        <label>b566</label>
    </ligand>
    <ligandPart>
        <name>Fe</name>
        <dbReference type="ChEBI" id="CHEBI:18248"/>
    </ligandPart>
</feature>
<feature type="binding site" description="axial binding residue" evidence="2">
    <location>
        <position position="182"/>
    </location>
    <ligand>
        <name>heme b</name>
        <dbReference type="ChEBI" id="CHEBI:60344"/>
        <label>b562</label>
    </ligand>
    <ligandPart>
        <name>Fe</name>
        <dbReference type="ChEBI" id="CHEBI:18248"/>
    </ligandPart>
</feature>
<feature type="binding site" description="axial binding residue" evidence="2">
    <location>
        <position position="196"/>
    </location>
    <ligand>
        <name>heme b</name>
        <dbReference type="ChEBI" id="CHEBI:60344"/>
        <label>b566</label>
    </ligand>
    <ligandPart>
        <name>Fe</name>
        <dbReference type="ChEBI" id="CHEBI:18248"/>
    </ligandPart>
</feature>
<feature type="binding site" evidence="2">
    <location>
        <position position="201"/>
    </location>
    <ligand>
        <name>a ubiquinone</name>
        <dbReference type="ChEBI" id="CHEBI:16389"/>
    </ligand>
</feature>
<keyword id="KW-0249">Electron transport</keyword>
<keyword id="KW-0349">Heme</keyword>
<keyword id="KW-0408">Iron</keyword>
<keyword id="KW-0472">Membrane</keyword>
<keyword id="KW-0479">Metal-binding</keyword>
<keyword id="KW-0496">Mitochondrion</keyword>
<keyword id="KW-0999">Mitochondrion inner membrane</keyword>
<keyword id="KW-0679">Respiratory chain</keyword>
<keyword id="KW-0812">Transmembrane</keyword>
<keyword id="KW-1133">Transmembrane helix</keyword>
<keyword id="KW-0813">Transport</keyword>
<keyword id="KW-0830">Ubiquinone</keyword>
<dbReference type="EMBL" id="AJ225030">
    <property type="protein sequence ID" value="CAA12361.1"/>
    <property type="molecule type" value="Genomic_DNA"/>
</dbReference>
<dbReference type="SMR" id="Q9ZZT7"/>
<dbReference type="GO" id="GO:0005743">
    <property type="term" value="C:mitochondrial inner membrane"/>
    <property type="evidence" value="ECO:0007669"/>
    <property type="project" value="UniProtKB-SubCell"/>
</dbReference>
<dbReference type="GO" id="GO:0045275">
    <property type="term" value="C:respiratory chain complex III"/>
    <property type="evidence" value="ECO:0007669"/>
    <property type="project" value="InterPro"/>
</dbReference>
<dbReference type="GO" id="GO:0046872">
    <property type="term" value="F:metal ion binding"/>
    <property type="evidence" value="ECO:0007669"/>
    <property type="project" value="UniProtKB-KW"/>
</dbReference>
<dbReference type="GO" id="GO:0008121">
    <property type="term" value="F:ubiquinol-cytochrome-c reductase activity"/>
    <property type="evidence" value="ECO:0007669"/>
    <property type="project" value="InterPro"/>
</dbReference>
<dbReference type="GO" id="GO:0006122">
    <property type="term" value="P:mitochondrial electron transport, ubiquinol to cytochrome c"/>
    <property type="evidence" value="ECO:0007669"/>
    <property type="project" value="TreeGrafter"/>
</dbReference>
<dbReference type="CDD" id="cd00290">
    <property type="entry name" value="cytochrome_b_C"/>
    <property type="match status" value="1"/>
</dbReference>
<dbReference type="CDD" id="cd00284">
    <property type="entry name" value="Cytochrome_b_N"/>
    <property type="match status" value="1"/>
</dbReference>
<dbReference type="FunFam" id="1.20.810.10:FF:000002">
    <property type="entry name" value="Cytochrome b"/>
    <property type="match status" value="1"/>
</dbReference>
<dbReference type="Gene3D" id="1.20.810.10">
    <property type="entry name" value="Cytochrome Bc1 Complex, Chain C"/>
    <property type="match status" value="1"/>
</dbReference>
<dbReference type="InterPro" id="IPR005798">
    <property type="entry name" value="Cyt_b/b6_C"/>
</dbReference>
<dbReference type="InterPro" id="IPR036150">
    <property type="entry name" value="Cyt_b/b6_C_sf"/>
</dbReference>
<dbReference type="InterPro" id="IPR005797">
    <property type="entry name" value="Cyt_b/b6_N"/>
</dbReference>
<dbReference type="InterPro" id="IPR027387">
    <property type="entry name" value="Cytb/b6-like_sf"/>
</dbReference>
<dbReference type="InterPro" id="IPR030689">
    <property type="entry name" value="Cytochrome_b"/>
</dbReference>
<dbReference type="InterPro" id="IPR048260">
    <property type="entry name" value="Cytochrome_b_C_euk/bac"/>
</dbReference>
<dbReference type="InterPro" id="IPR048259">
    <property type="entry name" value="Cytochrome_b_N_euk/bac"/>
</dbReference>
<dbReference type="InterPro" id="IPR016174">
    <property type="entry name" value="Di-haem_cyt_TM"/>
</dbReference>
<dbReference type="PANTHER" id="PTHR19271">
    <property type="entry name" value="CYTOCHROME B"/>
    <property type="match status" value="1"/>
</dbReference>
<dbReference type="PANTHER" id="PTHR19271:SF16">
    <property type="entry name" value="CYTOCHROME B"/>
    <property type="match status" value="1"/>
</dbReference>
<dbReference type="Pfam" id="PF00032">
    <property type="entry name" value="Cytochrom_B_C"/>
    <property type="match status" value="1"/>
</dbReference>
<dbReference type="Pfam" id="PF00033">
    <property type="entry name" value="Cytochrome_B"/>
    <property type="match status" value="1"/>
</dbReference>
<dbReference type="PIRSF" id="PIRSF038885">
    <property type="entry name" value="COB"/>
    <property type="match status" value="1"/>
</dbReference>
<dbReference type="SUPFAM" id="SSF81648">
    <property type="entry name" value="a domain/subunit of cytochrome bc1 complex (Ubiquinol-cytochrome c reductase)"/>
    <property type="match status" value="1"/>
</dbReference>
<dbReference type="SUPFAM" id="SSF81342">
    <property type="entry name" value="Transmembrane di-heme cytochromes"/>
    <property type="match status" value="1"/>
</dbReference>
<dbReference type="PROSITE" id="PS51003">
    <property type="entry name" value="CYTB_CTER"/>
    <property type="match status" value="1"/>
</dbReference>
<dbReference type="PROSITE" id="PS51002">
    <property type="entry name" value="CYTB_NTER"/>
    <property type="match status" value="1"/>
</dbReference>
<gene>
    <name type="primary">MT-CYB</name>
    <name type="synonym">COB</name>
    <name type="synonym">CYTB</name>
    <name type="synonym">MTCYB</name>
</gene>
<sequence length="379" mass="42865">MKNIRKTHPLIKIINHSFIDLPTPSNISAWWNFGSLLGVCLGIQILTGLFLAMHYTSDTMTAFSSVTHICRDVNYGWLIRYMHANGASMFFICLFLHVGRGIYYGSCLFTETWNIGIILLFAVMATAFMGYVLPWGQMSFWGATVITNLLSAIPYIGTTLVEWIWGGFSVDKATLTRFFAFHFILPFIITALVMVHLLFLHETGSNNPSGINSDSDKIPFHPYFTIKDILGFLLLISFMMSLVLFSPDLLGDPDNYTPANPLNTPPHIKPEWYFLFAYAILRSIPNKLGGVLALVFSILILALFPLLQLSKQRSMMFRPISQCMFWILTADLLTLTWIGGQPVEHPFIIIGQVASILYFLNILVMLPMASLLENKLLKW</sequence>
<geneLocation type="mitochondrion"/>